<evidence type="ECO:0000255" key="1">
    <source>
        <dbReference type="HAMAP-Rule" id="MF_03147"/>
    </source>
</evidence>
<organism>
    <name type="scientific">Candida albicans (strain SC5314 / ATCC MYA-2876)</name>
    <name type="common">Yeast</name>
    <dbReference type="NCBI Taxonomy" id="237561"/>
    <lineage>
        <taxon>Eukaryota</taxon>
        <taxon>Fungi</taxon>
        <taxon>Dikarya</taxon>
        <taxon>Ascomycota</taxon>
        <taxon>Saccharomycotina</taxon>
        <taxon>Pichiomycetes</taxon>
        <taxon>Debaryomycetaceae</taxon>
        <taxon>Candida/Lodderomyces clade</taxon>
        <taxon>Candida</taxon>
    </lineage>
</organism>
<name>GATB_CANAL</name>
<keyword id="KW-0067">ATP-binding</keyword>
<keyword id="KW-0436">Ligase</keyword>
<keyword id="KW-0496">Mitochondrion</keyword>
<keyword id="KW-0547">Nucleotide-binding</keyword>
<keyword id="KW-0648">Protein biosynthesis</keyword>
<keyword id="KW-1185">Reference proteome</keyword>
<protein>
    <recommendedName>
        <fullName evidence="1">Glutamyl-tRNA(Gln) amidotransferase subunit B, mitochondrial</fullName>
        <shortName evidence="1">Glu-AdT subunit B</shortName>
        <ecNumber evidence="1">6.3.5.-</ecNumber>
    </recommendedName>
</protein>
<reference key="1">
    <citation type="journal article" date="2004" name="Proc. Natl. Acad. Sci. U.S.A.">
        <title>The diploid genome sequence of Candida albicans.</title>
        <authorList>
            <person name="Jones T."/>
            <person name="Federspiel N.A."/>
            <person name="Chibana H."/>
            <person name="Dungan J."/>
            <person name="Kalman S."/>
            <person name="Magee B.B."/>
            <person name="Newport G."/>
            <person name="Thorstenson Y.R."/>
            <person name="Agabian N."/>
            <person name="Magee P.T."/>
            <person name="Davis R.W."/>
            <person name="Scherer S."/>
        </authorList>
    </citation>
    <scope>NUCLEOTIDE SEQUENCE [LARGE SCALE GENOMIC DNA]</scope>
    <source>
        <strain>SC5314 / ATCC MYA-2876</strain>
    </source>
</reference>
<reference key="2">
    <citation type="journal article" date="2007" name="Genome Biol.">
        <title>Assembly of the Candida albicans genome into sixteen supercontigs aligned on the eight chromosomes.</title>
        <authorList>
            <person name="van het Hoog M."/>
            <person name="Rast T.J."/>
            <person name="Martchenko M."/>
            <person name="Grindle S."/>
            <person name="Dignard D."/>
            <person name="Hogues H."/>
            <person name="Cuomo C."/>
            <person name="Berriman M."/>
            <person name="Scherer S."/>
            <person name="Magee B.B."/>
            <person name="Whiteway M."/>
            <person name="Chibana H."/>
            <person name="Nantel A."/>
            <person name="Magee P.T."/>
        </authorList>
    </citation>
    <scope>GENOME REANNOTATION</scope>
    <source>
        <strain>SC5314 / ATCC MYA-2876</strain>
    </source>
</reference>
<reference key="3">
    <citation type="journal article" date="2013" name="Genome Biol.">
        <title>Assembly of a phased diploid Candida albicans genome facilitates allele-specific measurements and provides a simple model for repeat and indel structure.</title>
        <authorList>
            <person name="Muzzey D."/>
            <person name="Schwartz K."/>
            <person name="Weissman J.S."/>
            <person name="Sherlock G."/>
        </authorList>
    </citation>
    <scope>NUCLEOTIDE SEQUENCE [LARGE SCALE GENOMIC DNA]</scope>
    <scope>GENOME REANNOTATION</scope>
    <source>
        <strain>SC5314 / ATCC MYA-2876</strain>
    </source>
</reference>
<gene>
    <name evidence="1" type="primary">PET112</name>
    <name type="ordered locus">CAALFM_C105610WA</name>
    <name type="ORF">CaO19.10030</name>
    <name type="ORF">CaO19.2494</name>
</gene>
<comment type="function">
    <text evidence="1">Allows the formation of correctly charged Gln-tRNA(Gln) through the transamidation of misacylated Glu-tRNA(Gln) in the mitochondria. The reaction takes place in the presence of glutamine and ATP through an activated gamma-phospho-Glu-tRNA(Gln).</text>
</comment>
<comment type="catalytic activity">
    <reaction evidence="1">
        <text>L-glutamyl-tRNA(Gln) + L-glutamine + ATP + H2O = L-glutaminyl-tRNA(Gln) + L-glutamate + ADP + phosphate + H(+)</text>
        <dbReference type="Rhea" id="RHEA:17521"/>
        <dbReference type="Rhea" id="RHEA-COMP:9681"/>
        <dbReference type="Rhea" id="RHEA-COMP:9684"/>
        <dbReference type="ChEBI" id="CHEBI:15377"/>
        <dbReference type="ChEBI" id="CHEBI:15378"/>
        <dbReference type="ChEBI" id="CHEBI:29985"/>
        <dbReference type="ChEBI" id="CHEBI:30616"/>
        <dbReference type="ChEBI" id="CHEBI:43474"/>
        <dbReference type="ChEBI" id="CHEBI:58359"/>
        <dbReference type="ChEBI" id="CHEBI:78520"/>
        <dbReference type="ChEBI" id="CHEBI:78521"/>
        <dbReference type="ChEBI" id="CHEBI:456216"/>
    </reaction>
</comment>
<comment type="subunit">
    <text evidence="1">Subunit of the heterotrimeric GatFAB amidotransferase (AdT) complex, composed of A, B and F subunits.</text>
</comment>
<comment type="subcellular location">
    <subcellularLocation>
        <location evidence="1">Mitochondrion</location>
    </subcellularLocation>
</comment>
<comment type="miscellaneous">
    <text evidence="1">This protein may be expected to contain an N-terminal transit peptide but none has been predicted.</text>
</comment>
<comment type="similarity">
    <text evidence="1">Belongs to the GatB/GatE family. GatB subfamily.</text>
</comment>
<sequence length="488" mass="55741">MSQISMFVRKLHKFSYNPNYKFKCGLEIHTQLKTKYKLFSLSPTSYNEPPNTKLSYFDVGLPGTQPLLNPEALLLALKASVALNCDIQSYSSFDRKHYFYADQPLGYQITQHYYPLAKNGYVQLNKFDDMPDKVISLEQVQLEQDTGKTVNYDDRINVDLNRANTPLIEVVTKPDFENIDQVQAFVRKYQLLVSHLDICTGDLETGAIRVDANISVNNNPRVEIKNLGSSGEIVDALKYEYNRQVTLLQNNGKIIQETRGWNGIATESLRKKENAVDYRYVPDSELPVIRLDKNIQAQLQNTLDELPDSVLDRLTKEPYNLQLAHARNLLFQPEILDYYENIFGRIRDANKWFFHELLAAFAKSDVEFQVDIVLPDMLVDIVSSVEKNEISLTGARIILKHIIRNKSTKTLPQLIKELDIGKPEASAELEEAINEICQQIINTNADVVEKIARGHTNALQVLIGQAMKATKGKVHAKEFRSKFMELLK</sequence>
<feature type="chain" id="PRO_0000413250" description="Glutamyl-tRNA(Gln) amidotransferase subunit B, mitochondrial">
    <location>
        <begin position="1"/>
        <end position="488"/>
    </location>
</feature>
<accession>Q5A9Z1</accession>
<accession>A0A1D8PDL3</accession>
<dbReference type="EC" id="6.3.5.-" evidence="1"/>
<dbReference type="EMBL" id="CP017623">
    <property type="protein sequence ID" value="AOW26226.1"/>
    <property type="molecule type" value="Genomic_DNA"/>
</dbReference>
<dbReference type="RefSeq" id="XP_718513.2">
    <property type="nucleotide sequence ID" value="XM_713420.2"/>
</dbReference>
<dbReference type="SMR" id="Q5A9Z1"/>
<dbReference type="FunCoup" id="Q5A9Z1">
    <property type="interactions" value="387"/>
</dbReference>
<dbReference type="STRING" id="237561.Q5A9Z1"/>
<dbReference type="EnsemblFungi" id="C1_05610W_A-T">
    <property type="protein sequence ID" value="C1_05610W_A-T-p1"/>
    <property type="gene ID" value="C1_05610W_A"/>
</dbReference>
<dbReference type="GeneID" id="3639843"/>
<dbReference type="KEGG" id="cal:CAALFM_C105610WA"/>
<dbReference type="CGD" id="CAL0000189636">
    <property type="gene designation" value="orf19.10030"/>
</dbReference>
<dbReference type="VEuPathDB" id="FungiDB:C1_05610W_A"/>
<dbReference type="eggNOG" id="KOG2438">
    <property type="taxonomic scope" value="Eukaryota"/>
</dbReference>
<dbReference type="HOGENOM" id="CLU_019240_4_0_1"/>
<dbReference type="InParanoid" id="Q5A9Z1"/>
<dbReference type="OMA" id="ARKWWMG"/>
<dbReference type="OrthoDB" id="1722066at2759"/>
<dbReference type="PRO" id="PR:Q5A9Z1"/>
<dbReference type="Proteomes" id="UP000000559">
    <property type="component" value="Chromosome 1"/>
</dbReference>
<dbReference type="GO" id="GO:0030956">
    <property type="term" value="C:glutamyl-tRNA(Gln) amidotransferase complex"/>
    <property type="evidence" value="ECO:0000318"/>
    <property type="project" value="GO_Central"/>
</dbReference>
<dbReference type="GO" id="GO:0005739">
    <property type="term" value="C:mitochondrion"/>
    <property type="evidence" value="ECO:0000318"/>
    <property type="project" value="GO_Central"/>
</dbReference>
<dbReference type="GO" id="GO:0005524">
    <property type="term" value="F:ATP binding"/>
    <property type="evidence" value="ECO:0007669"/>
    <property type="project" value="UniProtKB-KW"/>
</dbReference>
<dbReference type="GO" id="GO:0050567">
    <property type="term" value="F:glutaminyl-tRNA synthase (glutamine-hydrolyzing) activity"/>
    <property type="evidence" value="ECO:0000318"/>
    <property type="project" value="GO_Central"/>
</dbReference>
<dbReference type="GO" id="GO:0070681">
    <property type="term" value="P:glutaminyl-tRNAGln biosynthesis via transamidation"/>
    <property type="evidence" value="ECO:0000318"/>
    <property type="project" value="GO_Central"/>
</dbReference>
<dbReference type="GO" id="GO:0032543">
    <property type="term" value="P:mitochondrial translation"/>
    <property type="evidence" value="ECO:0000318"/>
    <property type="project" value="GO_Central"/>
</dbReference>
<dbReference type="Gene3D" id="1.10.10.410">
    <property type="match status" value="1"/>
</dbReference>
<dbReference type="HAMAP" id="MF_00121">
    <property type="entry name" value="GatB"/>
    <property type="match status" value="1"/>
</dbReference>
<dbReference type="InterPro" id="IPR017959">
    <property type="entry name" value="Asn/Gln-tRNA_amidoTrfase_suB/E"/>
</dbReference>
<dbReference type="InterPro" id="IPR006075">
    <property type="entry name" value="Asn/Gln-tRNA_Trfase_suB/E_cat"/>
</dbReference>
<dbReference type="InterPro" id="IPR018027">
    <property type="entry name" value="Asn/Gln_amidotransferase"/>
</dbReference>
<dbReference type="InterPro" id="IPR003789">
    <property type="entry name" value="Asn/Gln_tRNA_amidoTrase-B-like"/>
</dbReference>
<dbReference type="InterPro" id="IPR004413">
    <property type="entry name" value="GatB"/>
</dbReference>
<dbReference type="InterPro" id="IPR023168">
    <property type="entry name" value="GatB_Yqey_C_2"/>
</dbReference>
<dbReference type="InterPro" id="IPR017958">
    <property type="entry name" value="Gln-tRNA_amidoTrfase_suB_CS"/>
</dbReference>
<dbReference type="InterPro" id="IPR014746">
    <property type="entry name" value="Gln_synth/guanido_kin_cat_dom"/>
</dbReference>
<dbReference type="NCBIfam" id="TIGR00133">
    <property type="entry name" value="gatB"/>
    <property type="match status" value="1"/>
</dbReference>
<dbReference type="NCBIfam" id="NF004012">
    <property type="entry name" value="PRK05477.1-2"/>
    <property type="match status" value="1"/>
</dbReference>
<dbReference type="PANTHER" id="PTHR11659">
    <property type="entry name" value="GLUTAMYL-TRNA GLN AMIDOTRANSFERASE SUBUNIT B MITOCHONDRIAL AND PROKARYOTIC PET112-RELATED"/>
    <property type="match status" value="1"/>
</dbReference>
<dbReference type="PANTHER" id="PTHR11659:SF0">
    <property type="entry name" value="GLUTAMYL-TRNA(GLN) AMIDOTRANSFERASE SUBUNIT B, MITOCHONDRIAL"/>
    <property type="match status" value="1"/>
</dbReference>
<dbReference type="Pfam" id="PF02934">
    <property type="entry name" value="GatB_N"/>
    <property type="match status" value="1"/>
</dbReference>
<dbReference type="Pfam" id="PF02637">
    <property type="entry name" value="GatB_Yqey"/>
    <property type="match status" value="1"/>
</dbReference>
<dbReference type="SMART" id="SM00845">
    <property type="entry name" value="GatB_Yqey"/>
    <property type="match status" value="1"/>
</dbReference>
<dbReference type="SUPFAM" id="SSF89095">
    <property type="entry name" value="GatB/YqeY motif"/>
    <property type="match status" value="1"/>
</dbReference>
<dbReference type="SUPFAM" id="SSF55931">
    <property type="entry name" value="Glutamine synthetase/guanido kinase"/>
    <property type="match status" value="1"/>
</dbReference>
<dbReference type="PROSITE" id="PS01234">
    <property type="entry name" value="GATB"/>
    <property type="match status" value="1"/>
</dbReference>
<proteinExistence type="inferred from homology"/>